<keyword id="KW-0963">Cytoplasm</keyword>
<keyword id="KW-0328">Glycosyltransferase</keyword>
<keyword id="KW-0660">Purine salvage</keyword>
<keyword id="KW-1185">Reference proteome</keyword>
<keyword id="KW-0808">Transferase</keyword>
<dbReference type="EC" id="2.4.2.7" evidence="1"/>
<dbReference type="EMBL" id="AE015451">
    <property type="protein sequence ID" value="AAN69846.1"/>
    <property type="molecule type" value="Genomic_DNA"/>
</dbReference>
<dbReference type="RefSeq" id="NP_746382.1">
    <property type="nucleotide sequence ID" value="NC_002947.4"/>
</dbReference>
<dbReference type="RefSeq" id="WP_009683910.1">
    <property type="nucleotide sequence ID" value="NZ_CP169744.1"/>
</dbReference>
<dbReference type="SMR" id="Q88F33"/>
<dbReference type="STRING" id="160488.PP_4266"/>
<dbReference type="PaxDb" id="160488-PP_4266"/>
<dbReference type="KEGG" id="ppu:PP_4266"/>
<dbReference type="PATRIC" id="fig|160488.4.peg.4536"/>
<dbReference type="eggNOG" id="COG0503">
    <property type="taxonomic scope" value="Bacteria"/>
</dbReference>
<dbReference type="HOGENOM" id="CLU_063339_3_0_6"/>
<dbReference type="OrthoDB" id="9803963at2"/>
<dbReference type="PhylomeDB" id="Q88F33"/>
<dbReference type="BioCyc" id="PPUT160488:G1G01-4539-MONOMER"/>
<dbReference type="UniPathway" id="UPA00588">
    <property type="reaction ID" value="UER00646"/>
</dbReference>
<dbReference type="Proteomes" id="UP000000556">
    <property type="component" value="Chromosome"/>
</dbReference>
<dbReference type="GO" id="GO:0005829">
    <property type="term" value="C:cytosol"/>
    <property type="evidence" value="ECO:0007669"/>
    <property type="project" value="TreeGrafter"/>
</dbReference>
<dbReference type="GO" id="GO:0003999">
    <property type="term" value="F:adenine phosphoribosyltransferase activity"/>
    <property type="evidence" value="ECO:0007669"/>
    <property type="project" value="UniProtKB-UniRule"/>
</dbReference>
<dbReference type="GO" id="GO:0006168">
    <property type="term" value="P:adenine salvage"/>
    <property type="evidence" value="ECO:0007669"/>
    <property type="project" value="InterPro"/>
</dbReference>
<dbReference type="GO" id="GO:0044209">
    <property type="term" value="P:AMP salvage"/>
    <property type="evidence" value="ECO:0007669"/>
    <property type="project" value="UniProtKB-UniRule"/>
</dbReference>
<dbReference type="GO" id="GO:0006166">
    <property type="term" value="P:purine ribonucleoside salvage"/>
    <property type="evidence" value="ECO:0007669"/>
    <property type="project" value="UniProtKB-KW"/>
</dbReference>
<dbReference type="CDD" id="cd06223">
    <property type="entry name" value="PRTases_typeI"/>
    <property type="match status" value="1"/>
</dbReference>
<dbReference type="FunFam" id="3.40.50.2020:FF:000021">
    <property type="entry name" value="Adenine phosphoribosyltransferase"/>
    <property type="match status" value="1"/>
</dbReference>
<dbReference type="Gene3D" id="3.40.50.2020">
    <property type="match status" value="1"/>
</dbReference>
<dbReference type="HAMAP" id="MF_00004">
    <property type="entry name" value="Aden_phosphoribosyltr"/>
    <property type="match status" value="1"/>
</dbReference>
<dbReference type="InterPro" id="IPR005764">
    <property type="entry name" value="Ade_phspho_trans"/>
</dbReference>
<dbReference type="InterPro" id="IPR050120">
    <property type="entry name" value="Adenine_PRTase"/>
</dbReference>
<dbReference type="InterPro" id="IPR000836">
    <property type="entry name" value="PRibTrfase_dom"/>
</dbReference>
<dbReference type="InterPro" id="IPR029057">
    <property type="entry name" value="PRTase-like"/>
</dbReference>
<dbReference type="NCBIfam" id="TIGR01090">
    <property type="entry name" value="apt"/>
    <property type="match status" value="1"/>
</dbReference>
<dbReference type="NCBIfam" id="NF002634">
    <property type="entry name" value="PRK02304.1-3"/>
    <property type="match status" value="1"/>
</dbReference>
<dbReference type="NCBIfam" id="NF002636">
    <property type="entry name" value="PRK02304.1-5"/>
    <property type="match status" value="1"/>
</dbReference>
<dbReference type="PANTHER" id="PTHR11776">
    <property type="entry name" value="ADENINE PHOSPHORIBOSYLTRANSFERASE"/>
    <property type="match status" value="1"/>
</dbReference>
<dbReference type="PANTHER" id="PTHR11776:SF7">
    <property type="entry name" value="PHOSPHORIBOSYLTRANSFERASE DOMAIN-CONTAINING PROTEIN"/>
    <property type="match status" value="1"/>
</dbReference>
<dbReference type="Pfam" id="PF00156">
    <property type="entry name" value="Pribosyltran"/>
    <property type="match status" value="1"/>
</dbReference>
<dbReference type="SUPFAM" id="SSF53271">
    <property type="entry name" value="PRTase-like"/>
    <property type="match status" value="1"/>
</dbReference>
<dbReference type="PROSITE" id="PS00103">
    <property type="entry name" value="PUR_PYR_PR_TRANSFER"/>
    <property type="match status" value="1"/>
</dbReference>
<evidence type="ECO:0000255" key="1">
    <source>
        <dbReference type="HAMAP-Rule" id="MF_00004"/>
    </source>
</evidence>
<accession>Q88F33</accession>
<organism>
    <name type="scientific">Pseudomonas putida (strain ATCC 47054 / DSM 6125 / CFBP 8728 / NCIMB 11950 / KT2440)</name>
    <dbReference type="NCBI Taxonomy" id="160488"/>
    <lineage>
        <taxon>Bacteria</taxon>
        <taxon>Pseudomonadati</taxon>
        <taxon>Pseudomonadota</taxon>
        <taxon>Gammaproteobacteria</taxon>
        <taxon>Pseudomonadales</taxon>
        <taxon>Pseudomonadaceae</taxon>
        <taxon>Pseudomonas</taxon>
    </lineage>
</organism>
<protein>
    <recommendedName>
        <fullName evidence="1">Adenine phosphoribosyltransferase</fullName>
        <shortName evidence="1">APRT</shortName>
        <ecNumber evidence="1">2.4.2.7</ecNumber>
    </recommendedName>
</protein>
<name>APT_PSEPK</name>
<proteinExistence type="inferred from homology"/>
<feature type="chain" id="PRO_0000149434" description="Adenine phosphoribosyltransferase">
    <location>
        <begin position="1"/>
        <end position="182"/>
    </location>
</feature>
<comment type="function">
    <text evidence="1">Catalyzes a salvage reaction resulting in the formation of AMP, that is energically less costly than de novo synthesis.</text>
</comment>
<comment type="catalytic activity">
    <reaction evidence="1">
        <text>AMP + diphosphate = 5-phospho-alpha-D-ribose 1-diphosphate + adenine</text>
        <dbReference type="Rhea" id="RHEA:16609"/>
        <dbReference type="ChEBI" id="CHEBI:16708"/>
        <dbReference type="ChEBI" id="CHEBI:33019"/>
        <dbReference type="ChEBI" id="CHEBI:58017"/>
        <dbReference type="ChEBI" id="CHEBI:456215"/>
        <dbReference type="EC" id="2.4.2.7"/>
    </reaction>
</comment>
<comment type="pathway">
    <text evidence="1">Purine metabolism; AMP biosynthesis via salvage pathway; AMP from adenine: step 1/1.</text>
</comment>
<comment type="subunit">
    <text evidence="1">Homodimer.</text>
</comment>
<comment type="subcellular location">
    <subcellularLocation>
        <location evidence="1">Cytoplasm</location>
    </subcellularLocation>
</comment>
<comment type="similarity">
    <text evidence="1">Belongs to the purine/pyrimidine phosphoribosyltransferase family.</text>
</comment>
<reference key="1">
    <citation type="journal article" date="2002" name="Environ. Microbiol.">
        <title>Complete genome sequence and comparative analysis of the metabolically versatile Pseudomonas putida KT2440.</title>
        <authorList>
            <person name="Nelson K.E."/>
            <person name="Weinel C."/>
            <person name="Paulsen I.T."/>
            <person name="Dodson R.J."/>
            <person name="Hilbert H."/>
            <person name="Martins dos Santos V.A.P."/>
            <person name="Fouts D.E."/>
            <person name="Gill S.R."/>
            <person name="Pop M."/>
            <person name="Holmes M."/>
            <person name="Brinkac L.M."/>
            <person name="Beanan M.J."/>
            <person name="DeBoy R.T."/>
            <person name="Daugherty S.C."/>
            <person name="Kolonay J.F."/>
            <person name="Madupu R."/>
            <person name="Nelson W.C."/>
            <person name="White O."/>
            <person name="Peterson J.D."/>
            <person name="Khouri H.M."/>
            <person name="Hance I."/>
            <person name="Chris Lee P."/>
            <person name="Holtzapple E.K."/>
            <person name="Scanlan D."/>
            <person name="Tran K."/>
            <person name="Moazzez A."/>
            <person name="Utterback T.R."/>
            <person name="Rizzo M."/>
            <person name="Lee K."/>
            <person name="Kosack D."/>
            <person name="Moestl D."/>
            <person name="Wedler H."/>
            <person name="Lauber J."/>
            <person name="Stjepandic D."/>
            <person name="Hoheisel J."/>
            <person name="Straetz M."/>
            <person name="Heim S."/>
            <person name="Kiewitz C."/>
            <person name="Eisen J.A."/>
            <person name="Timmis K.N."/>
            <person name="Duesterhoeft A."/>
            <person name="Tuemmler B."/>
            <person name="Fraser C.M."/>
        </authorList>
    </citation>
    <scope>NUCLEOTIDE SEQUENCE [LARGE SCALE GENOMIC DNA]</scope>
    <source>
        <strain>ATCC 47054 / DSM 6125 / CFBP 8728 / NCIMB 11950 / KT2440</strain>
    </source>
</reference>
<sequence length="182" mass="20018">MHSDAFDLKALIRPVVDFPKPGVIFRDITPLFQSPRGLRYVADQFIERYVEAEFSHIGAMDARGFLIGSIIAHQLNKPLILFRKQGKLPADVLSEGYQTEYGEAFLEVHADSLCEGDSVLIFDDLIATGGTLLAAANLVRRTGAQVFEAAAIIDLPELDGSRRLQAAGVPTFCLTEFSLSEY</sequence>
<gene>
    <name evidence="1" type="primary">apt</name>
    <name type="ordered locus">PP_4266</name>
</gene>